<organism>
    <name type="scientific">Saccharomyces cerevisiae (strain ATCC 204508 / S288c)</name>
    <name type="common">Baker's yeast</name>
    <dbReference type="NCBI Taxonomy" id="559292"/>
    <lineage>
        <taxon>Eukaryota</taxon>
        <taxon>Fungi</taxon>
        <taxon>Dikarya</taxon>
        <taxon>Ascomycota</taxon>
        <taxon>Saccharomycotina</taxon>
        <taxon>Saccharomycetes</taxon>
        <taxon>Saccharomycetales</taxon>
        <taxon>Saccharomycetaceae</taxon>
        <taxon>Saccharomyces</taxon>
    </lineage>
</organism>
<protein>
    <recommendedName>
        <fullName>Serine/threonine-protein kinase PKH1</fullName>
        <ecNumber>2.7.11.1</ecNumber>
    </recommendedName>
    <alternativeName>
        <fullName>3-phosphoinositide-dependent protein kinase 1</fullName>
    </alternativeName>
</protein>
<accession>Q03407</accession>
<accession>D6VTB3</accession>
<proteinExistence type="evidence at protein level"/>
<sequence length="766" mass="86253">MGNRSLTEADHALLSKPLVPTSAEHTQTQEYPRPFVDGSNSQSGSELQASPQGQFGEKALTSTNRFIPLANDDPGMQHEMGLDPSMRRRREEWAERGAAKIVKDVVDPATGELTKHVVKMGIKDFKFGEQLGDGSYSSVVLATARDSGKKYAVKVLSKEYLIRQKKVKYVTVEKLALQKLNGTKGIFKLFFTFQDEASLYFLLEYAPHGDFLGLIKKYGSLNETCARYYASQIIDAVDSLHNIGIIHRDIKPENILLDKNMKVKLTDFGTAKILPEEPSNTADGKPYFDLYAKSKSFVGTAEYVSPELLNDNYTDSRCDIWAFGCILYQMLAGKPPFKAANEYLTFQKVMKIQYAFTAGFPQIVKDLVKKLLVRDPNDRLTIKQIKAHLFFHEVNFEDGSVWDDNPPEIQPYKINAEAMKPLQKVSESDTTVKMANLQLAGNGHADTPLQAPAATSQEHSVISMTAATAAFNKDYTSQPKLGSKSSTSVRSASNNTDREVIQKKVSKNRASVSSPSISTTSRGKDNRSRSSDAFWSRYLQNMDERVLLMKEVALSTRNLEDSPVGLENVALDYKNPLDIEPPTDSAGKFYKKMFLITNLGRALVFVKRRSLSMWEEQEFELQFELELNDVEKIRFISDQVLEIDGSRTIFIGCKERAVLMKLWKLIHNGMTAKPKVVSPKSDHKMFDKFILQKRQNTKKKNQAPPVPQSNRLINGLPDRCILKTPEEGALHTKRPTSLQTRSSSNYSKLLARSTQMRKNMTRTDEK</sequence>
<comment type="function">
    <text evidence="5">Activates YPK1 by phosphorylating of a threonine residue.</text>
</comment>
<comment type="catalytic activity">
    <reaction>
        <text>L-seryl-[protein] + ATP = O-phospho-L-seryl-[protein] + ADP + H(+)</text>
        <dbReference type="Rhea" id="RHEA:17989"/>
        <dbReference type="Rhea" id="RHEA-COMP:9863"/>
        <dbReference type="Rhea" id="RHEA-COMP:11604"/>
        <dbReference type="ChEBI" id="CHEBI:15378"/>
        <dbReference type="ChEBI" id="CHEBI:29999"/>
        <dbReference type="ChEBI" id="CHEBI:30616"/>
        <dbReference type="ChEBI" id="CHEBI:83421"/>
        <dbReference type="ChEBI" id="CHEBI:456216"/>
        <dbReference type="EC" id="2.7.11.1"/>
    </reaction>
</comment>
<comment type="catalytic activity">
    <reaction>
        <text>L-threonyl-[protein] + ATP = O-phospho-L-threonyl-[protein] + ADP + H(+)</text>
        <dbReference type="Rhea" id="RHEA:46608"/>
        <dbReference type="Rhea" id="RHEA-COMP:11060"/>
        <dbReference type="Rhea" id="RHEA-COMP:11605"/>
        <dbReference type="ChEBI" id="CHEBI:15378"/>
        <dbReference type="ChEBI" id="CHEBI:30013"/>
        <dbReference type="ChEBI" id="CHEBI:30616"/>
        <dbReference type="ChEBI" id="CHEBI:61977"/>
        <dbReference type="ChEBI" id="CHEBI:456216"/>
        <dbReference type="EC" id="2.7.11.1"/>
    </reaction>
</comment>
<comment type="interaction">
    <interactant intactId="EBI-32467">
        <id>Q03407</id>
    </interactant>
    <interactant intactId="EBI-8659">
        <id>P02829</id>
        <label>HSP82</label>
    </interactant>
    <organismsDiffer>false</organismsDiffer>
    <experiments>2</experiments>
</comment>
<comment type="interaction">
    <interactant intactId="EBI-32467">
        <id>Q03407</id>
    </interactant>
    <interactant intactId="EBI-23225">
        <id>P53252</id>
        <label>PIL1</label>
    </interactant>
    <organismsDiffer>false</organismsDiffer>
    <experiments>5</experiments>
</comment>
<comment type="domain">
    <text evidence="1">The PIF-pocket is a small lobe in the catalytic domain required by the enzyme for the binding to the hydrophobic motif of its substrates. It is an allosteric regulatory site that can accommodate small compounds acting as allosteric inhibitors.</text>
</comment>
<comment type="similarity">
    <text evidence="6">Belongs to the protein kinase superfamily. AGC Ser/Thr protein kinase family. PDPK1 subfamily.</text>
</comment>
<evidence type="ECO:0000250" key="1">
    <source>
        <dbReference type="UniProtKB" id="O15530"/>
    </source>
</evidence>
<evidence type="ECO:0000255" key="2">
    <source>
        <dbReference type="PROSITE-ProRule" id="PRU00159"/>
    </source>
</evidence>
<evidence type="ECO:0000255" key="3">
    <source>
        <dbReference type="PROSITE-ProRule" id="PRU10027"/>
    </source>
</evidence>
<evidence type="ECO:0000256" key="4">
    <source>
        <dbReference type="SAM" id="MobiDB-lite"/>
    </source>
</evidence>
<evidence type="ECO:0000269" key="5">
    <source>
    </source>
</evidence>
<evidence type="ECO:0000305" key="6"/>
<evidence type="ECO:0007744" key="7">
    <source>
    </source>
</evidence>
<evidence type="ECO:0007744" key="8">
    <source>
    </source>
</evidence>
<evidence type="ECO:0007744" key="9">
    <source>
    </source>
</evidence>
<reference key="1">
    <citation type="journal article" date="1997" name="Nature">
        <title>The nucleotide sequence of Saccharomyces cerevisiae chromosome IV.</title>
        <authorList>
            <person name="Jacq C."/>
            <person name="Alt-Moerbe J."/>
            <person name="Andre B."/>
            <person name="Arnold W."/>
            <person name="Bahr A."/>
            <person name="Ballesta J.P.G."/>
            <person name="Bargues M."/>
            <person name="Baron L."/>
            <person name="Becker A."/>
            <person name="Biteau N."/>
            <person name="Bloecker H."/>
            <person name="Blugeon C."/>
            <person name="Boskovic J."/>
            <person name="Brandt P."/>
            <person name="Brueckner M."/>
            <person name="Buitrago M.J."/>
            <person name="Coster F."/>
            <person name="Delaveau T."/>
            <person name="del Rey F."/>
            <person name="Dujon B."/>
            <person name="Eide L.G."/>
            <person name="Garcia-Cantalejo J.M."/>
            <person name="Goffeau A."/>
            <person name="Gomez-Peris A."/>
            <person name="Granotier C."/>
            <person name="Hanemann V."/>
            <person name="Hankeln T."/>
            <person name="Hoheisel J.D."/>
            <person name="Jaeger W."/>
            <person name="Jimenez A."/>
            <person name="Jonniaux J.-L."/>
            <person name="Kraemer C."/>
            <person name="Kuester H."/>
            <person name="Laamanen P."/>
            <person name="Legros Y."/>
            <person name="Louis E.J."/>
            <person name="Moeller-Rieker S."/>
            <person name="Monnet A."/>
            <person name="Moro M."/>
            <person name="Mueller-Auer S."/>
            <person name="Nussbaumer B."/>
            <person name="Paricio N."/>
            <person name="Paulin L."/>
            <person name="Perea J."/>
            <person name="Perez-Alonso M."/>
            <person name="Perez-Ortin J.E."/>
            <person name="Pohl T.M."/>
            <person name="Prydz H."/>
            <person name="Purnelle B."/>
            <person name="Rasmussen S.W."/>
            <person name="Remacha M.A."/>
            <person name="Revuelta J.L."/>
            <person name="Rieger M."/>
            <person name="Salom D."/>
            <person name="Saluz H.P."/>
            <person name="Saiz J.E."/>
            <person name="Saren A.-M."/>
            <person name="Schaefer M."/>
            <person name="Scharfe M."/>
            <person name="Schmidt E.R."/>
            <person name="Schneider C."/>
            <person name="Scholler P."/>
            <person name="Schwarz S."/>
            <person name="Soler-Mira A."/>
            <person name="Urrestarazu L.A."/>
            <person name="Verhasselt P."/>
            <person name="Vissers S."/>
            <person name="Voet M."/>
            <person name="Volckaert G."/>
            <person name="Wagner G."/>
            <person name="Wambutt R."/>
            <person name="Wedler E."/>
            <person name="Wedler H."/>
            <person name="Woelfl S."/>
            <person name="Harris D.E."/>
            <person name="Bowman S."/>
            <person name="Brown D."/>
            <person name="Churcher C.M."/>
            <person name="Connor R."/>
            <person name="Dedman K."/>
            <person name="Gentles S."/>
            <person name="Hamlin N."/>
            <person name="Hunt S."/>
            <person name="Jones L."/>
            <person name="McDonald S."/>
            <person name="Murphy L.D."/>
            <person name="Niblett D."/>
            <person name="Odell C."/>
            <person name="Oliver K."/>
            <person name="Rajandream M.A."/>
            <person name="Richards C."/>
            <person name="Shore L."/>
            <person name="Walsh S.V."/>
            <person name="Barrell B.G."/>
            <person name="Dietrich F.S."/>
            <person name="Mulligan J.T."/>
            <person name="Allen E."/>
            <person name="Araujo R."/>
            <person name="Aviles E."/>
            <person name="Berno A."/>
            <person name="Carpenter J."/>
            <person name="Chen E."/>
            <person name="Cherry J.M."/>
            <person name="Chung E."/>
            <person name="Duncan M."/>
            <person name="Hunicke-Smith S."/>
            <person name="Hyman R.W."/>
            <person name="Komp C."/>
            <person name="Lashkari D."/>
            <person name="Lew H."/>
            <person name="Lin D."/>
            <person name="Mosedale D."/>
            <person name="Nakahara K."/>
            <person name="Namath A."/>
            <person name="Oefner P."/>
            <person name="Oh C."/>
            <person name="Petel F.X."/>
            <person name="Roberts D."/>
            <person name="Schramm S."/>
            <person name="Schroeder M."/>
            <person name="Shogren T."/>
            <person name="Shroff N."/>
            <person name="Winant A."/>
            <person name="Yelton M.A."/>
            <person name="Botstein D."/>
            <person name="Davis R.W."/>
            <person name="Johnston M."/>
            <person name="Andrews S."/>
            <person name="Brinkman R."/>
            <person name="Cooper J."/>
            <person name="Ding H."/>
            <person name="Du Z."/>
            <person name="Favello A."/>
            <person name="Fulton L."/>
            <person name="Gattung S."/>
            <person name="Greco T."/>
            <person name="Hallsworth K."/>
            <person name="Hawkins J."/>
            <person name="Hillier L.W."/>
            <person name="Jier M."/>
            <person name="Johnson D."/>
            <person name="Johnston L."/>
            <person name="Kirsten J."/>
            <person name="Kucaba T."/>
            <person name="Langston Y."/>
            <person name="Latreille P."/>
            <person name="Le T."/>
            <person name="Mardis E."/>
            <person name="Menezes S."/>
            <person name="Miller N."/>
            <person name="Nhan M."/>
            <person name="Pauley A."/>
            <person name="Peluso D."/>
            <person name="Rifkin L."/>
            <person name="Riles L."/>
            <person name="Taich A."/>
            <person name="Trevaskis E."/>
            <person name="Vignati D."/>
            <person name="Wilcox L."/>
            <person name="Wohldman P."/>
            <person name="Vaudin M."/>
            <person name="Wilson R."/>
            <person name="Waterston R."/>
            <person name="Albermann K."/>
            <person name="Hani J."/>
            <person name="Heumann K."/>
            <person name="Kleine K."/>
            <person name="Mewes H.-W."/>
            <person name="Zollner A."/>
            <person name="Zaccaria P."/>
        </authorList>
    </citation>
    <scope>NUCLEOTIDE SEQUENCE [LARGE SCALE GENOMIC DNA]</scope>
    <source>
        <strain>ATCC 204508 / S288c</strain>
    </source>
</reference>
<reference key="2">
    <citation type="journal article" date="2014" name="G3 (Bethesda)">
        <title>The reference genome sequence of Saccharomyces cerevisiae: Then and now.</title>
        <authorList>
            <person name="Engel S.R."/>
            <person name="Dietrich F.S."/>
            <person name="Fisk D.G."/>
            <person name="Binkley G."/>
            <person name="Balakrishnan R."/>
            <person name="Costanzo M.C."/>
            <person name="Dwight S.S."/>
            <person name="Hitz B.C."/>
            <person name="Karra K."/>
            <person name="Nash R.S."/>
            <person name="Weng S."/>
            <person name="Wong E.D."/>
            <person name="Lloyd P."/>
            <person name="Skrzypek M.S."/>
            <person name="Miyasato S.R."/>
            <person name="Simison M."/>
            <person name="Cherry J.M."/>
        </authorList>
    </citation>
    <scope>GENOME REANNOTATION</scope>
    <source>
        <strain>ATCC 204508 / S288c</strain>
    </source>
</reference>
<reference key="3">
    <citation type="journal article" date="1999" name="Curr. Biol.">
        <title>Functional counterparts of mammalian protein kinases PDK1 and SGK in budding yeast.</title>
        <authorList>
            <person name="Casamayor A."/>
            <person name="Torrance P.D."/>
            <person name="Kobayashi T."/>
            <person name="Thorner J."/>
            <person name="Alessi D.R."/>
        </authorList>
    </citation>
    <scope>FUNCTION</scope>
</reference>
<reference key="4">
    <citation type="journal article" date="2005" name="Mol. Cell. Proteomics">
        <title>Quantitative phosphoproteomics applied to the yeast pheromone signaling pathway.</title>
        <authorList>
            <person name="Gruhler A."/>
            <person name="Olsen J.V."/>
            <person name="Mohammed S."/>
            <person name="Mortensen P."/>
            <person name="Faergeman N.J."/>
            <person name="Mann M."/>
            <person name="Jensen O.N."/>
        </authorList>
    </citation>
    <scope>PHOSPHORYLATION [LARGE SCALE ANALYSIS] AT SER-296</scope>
    <scope>IDENTIFICATION BY MASS SPECTROMETRY [LARGE SCALE ANALYSIS]</scope>
    <source>
        <strain>YAL6B</strain>
    </source>
</reference>
<reference key="5">
    <citation type="journal article" date="2007" name="J. Proteome Res.">
        <title>Large-scale phosphorylation analysis of alpha-factor-arrested Saccharomyces cerevisiae.</title>
        <authorList>
            <person name="Li X."/>
            <person name="Gerber S.A."/>
            <person name="Rudner A.D."/>
            <person name="Beausoleil S.A."/>
            <person name="Haas W."/>
            <person name="Villen J."/>
            <person name="Elias J.E."/>
            <person name="Gygi S.P."/>
        </authorList>
    </citation>
    <scope>IDENTIFICATION BY MASS SPECTROMETRY [LARGE SCALE ANALYSIS]</scope>
    <source>
        <strain>ADR376</strain>
    </source>
</reference>
<reference key="6">
    <citation type="journal article" date="2008" name="Mol. Cell. Proteomics">
        <title>A multidimensional chromatography technology for in-depth phosphoproteome analysis.</title>
        <authorList>
            <person name="Albuquerque C.P."/>
            <person name="Smolka M.B."/>
            <person name="Payne S.H."/>
            <person name="Bafna V."/>
            <person name="Eng J."/>
            <person name="Zhou H."/>
        </authorList>
    </citation>
    <scope>PHOSPHORYLATION [LARGE SCALE ANALYSIS] AT SER-296</scope>
    <scope>IDENTIFICATION BY MASS SPECTROMETRY [LARGE SCALE ANALYSIS]</scope>
</reference>
<reference key="7">
    <citation type="journal article" date="2009" name="Science">
        <title>Global analysis of Cdk1 substrate phosphorylation sites provides insights into evolution.</title>
        <authorList>
            <person name="Holt L.J."/>
            <person name="Tuch B.B."/>
            <person name="Villen J."/>
            <person name="Johnson A.D."/>
            <person name="Gygi S.P."/>
            <person name="Morgan D.O."/>
        </authorList>
    </citation>
    <scope>PHOSPHORYLATION [LARGE SCALE ANALYSIS] AT SER-294 AND SER-296</scope>
    <scope>IDENTIFICATION BY MASS SPECTROMETRY [LARGE SCALE ANALYSIS]</scope>
</reference>
<gene>
    <name type="primary">PKH1</name>
    <name type="ordered locus">YDR490C</name>
</gene>
<dbReference type="EC" id="2.7.11.1"/>
<dbReference type="EMBL" id="U33050">
    <property type="protein sequence ID" value="AAB64917.1"/>
    <property type="molecule type" value="Genomic_DNA"/>
</dbReference>
<dbReference type="EMBL" id="BK006938">
    <property type="protein sequence ID" value="DAA12323.1"/>
    <property type="molecule type" value="Genomic_DNA"/>
</dbReference>
<dbReference type="PIR" id="S69657">
    <property type="entry name" value="S69657"/>
</dbReference>
<dbReference type="RefSeq" id="NP_010778.3">
    <property type="nucleotide sequence ID" value="NM_001180798.3"/>
</dbReference>
<dbReference type="SMR" id="Q03407"/>
<dbReference type="BioGRID" id="32542">
    <property type="interactions" value="156"/>
</dbReference>
<dbReference type="DIP" id="DIP-1518N"/>
<dbReference type="ELM" id="Q03407"/>
<dbReference type="FunCoup" id="Q03407">
    <property type="interactions" value="528"/>
</dbReference>
<dbReference type="IntAct" id="Q03407">
    <property type="interactions" value="12"/>
</dbReference>
<dbReference type="MINT" id="Q03407"/>
<dbReference type="STRING" id="4932.YDR490C"/>
<dbReference type="iPTMnet" id="Q03407"/>
<dbReference type="PaxDb" id="4932-YDR490C"/>
<dbReference type="PeptideAtlas" id="Q03407"/>
<dbReference type="EnsemblFungi" id="YDR490C_mRNA">
    <property type="protein sequence ID" value="YDR490C"/>
    <property type="gene ID" value="YDR490C"/>
</dbReference>
<dbReference type="GeneID" id="852101"/>
<dbReference type="KEGG" id="sce:YDR490C"/>
<dbReference type="AGR" id="SGD:S000002898"/>
<dbReference type="SGD" id="S000002898">
    <property type="gene designation" value="PKH1"/>
</dbReference>
<dbReference type="VEuPathDB" id="FungiDB:YDR490C"/>
<dbReference type="eggNOG" id="KOG0592">
    <property type="taxonomic scope" value="Eukaryota"/>
</dbReference>
<dbReference type="GeneTree" id="ENSGT00940000155267"/>
<dbReference type="HOGENOM" id="CLU_388927_0_0_1"/>
<dbReference type="InParanoid" id="Q03407"/>
<dbReference type="OMA" id="NETCARY"/>
<dbReference type="OrthoDB" id="347657at2759"/>
<dbReference type="BioCyc" id="YEAST:G3O-30014-MONOMER"/>
<dbReference type="BioGRID-ORCS" id="852101">
    <property type="hits" value="0 hits in 13 CRISPR screens"/>
</dbReference>
<dbReference type="PRO" id="PR:Q03407"/>
<dbReference type="Proteomes" id="UP000002311">
    <property type="component" value="Chromosome IV"/>
</dbReference>
<dbReference type="RNAct" id="Q03407">
    <property type="molecule type" value="protein"/>
</dbReference>
<dbReference type="GO" id="GO:0005938">
    <property type="term" value="C:cell cortex"/>
    <property type="evidence" value="ECO:0000314"/>
    <property type="project" value="SGD"/>
</dbReference>
<dbReference type="GO" id="GO:0005829">
    <property type="term" value="C:cytosol"/>
    <property type="evidence" value="ECO:0000314"/>
    <property type="project" value="SGD"/>
</dbReference>
<dbReference type="GO" id="GO:0005524">
    <property type="term" value="F:ATP binding"/>
    <property type="evidence" value="ECO:0007669"/>
    <property type="project" value="UniProtKB-KW"/>
</dbReference>
<dbReference type="GO" id="GO:0106310">
    <property type="term" value="F:protein serine kinase activity"/>
    <property type="evidence" value="ECO:0007669"/>
    <property type="project" value="RHEA"/>
</dbReference>
<dbReference type="GO" id="GO:0004674">
    <property type="term" value="F:protein serine/threonine kinase activity"/>
    <property type="evidence" value="ECO:0000314"/>
    <property type="project" value="SGD"/>
</dbReference>
<dbReference type="GO" id="GO:0000196">
    <property type="term" value="P:cell integrity MAPK cascade"/>
    <property type="evidence" value="ECO:0000315"/>
    <property type="project" value="SGD"/>
</dbReference>
<dbReference type="GO" id="GO:0006897">
    <property type="term" value="P:endocytosis"/>
    <property type="evidence" value="ECO:0000315"/>
    <property type="project" value="SGD"/>
</dbReference>
<dbReference type="GO" id="GO:0035556">
    <property type="term" value="P:intracellular signal transduction"/>
    <property type="evidence" value="ECO:0000318"/>
    <property type="project" value="GO_Central"/>
</dbReference>
<dbReference type="GO" id="GO:0032511">
    <property type="term" value="P:late endosome to vacuole transport via multivesicular body sorting pathway"/>
    <property type="evidence" value="ECO:0000316"/>
    <property type="project" value="SGD"/>
</dbReference>
<dbReference type="GO" id="GO:0010606">
    <property type="term" value="P:positive regulation of cytoplasmic mRNA processing body assembly"/>
    <property type="evidence" value="ECO:0000316"/>
    <property type="project" value="SGD"/>
</dbReference>
<dbReference type="GO" id="GO:0060211">
    <property type="term" value="P:regulation of nuclear-transcribed mRNA poly(A) tail shortening"/>
    <property type="evidence" value="ECO:0000316"/>
    <property type="project" value="SGD"/>
</dbReference>
<dbReference type="CDD" id="cd05581">
    <property type="entry name" value="STKc_PDK1"/>
    <property type="match status" value="1"/>
</dbReference>
<dbReference type="FunFam" id="3.30.200.20:FF:000191">
    <property type="entry name" value="3-phosphoinositide-dependent protein kinase 2-like"/>
    <property type="match status" value="1"/>
</dbReference>
<dbReference type="FunFam" id="1.10.510.10:FF:000534">
    <property type="entry name" value="Serine/threonine-protein kinase PKH2"/>
    <property type="match status" value="1"/>
</dbReference>
<dbReference type="Gene3D" id="3.30.200.20">
    <property type="entry name" value="Phosphorylase Kinase, domain 1"/>
    <property type="match status" value="1"/>
</dbReference>
<dbReference type="Gene3D" id="1.10.510.10">
    <property type="entry name" value="Transferase(Phosphotransferase) domain 1"/>
    <property type="match status" value="1"/>
</dbReference>
<dbReference type="InterPro" id="IPR011009">
    <property type="entry name" value="Kinase-like_dom_sf"/>
</dbReference>
<dbReference type="InterPro" id="IPR039046">
    <property type="entry name" value="PDPK1"/>
</dbReference>
<dbReference type="InterPro" id="IPR000719">
    <property type="entry name" value="Prot_kinase_dom"/>
</dbReference>
<dbReference type="InterPro" id="IPR017441">
    <property type="entry name" value="Protein_kinase_ATP_BS"/>
</dbReference>
<dbReference type="InterPro" id="IPR008271">
    <property type="entry name" value="Ser/Thr_kinase_AS"/>
</dbReference>
<dbReference type="InterPro" id="IPR050236">
    <property type="entry name" value="Ser_Thr_kinase_AGC"/>
</dbReference>
<dbReference type="PANTHER" id="PTHR24356:SF163">
    <property type="entry name" value="3-PHOSPHOINOSITIDE-DEPENDENT PROTEIN KINASE 1-RELATED"/>
    <property type="match status" value="1"/>
</dbReference>
<dbReference type="PANTHER" id="PTHR24356">
    <property type="entry name" value="SERINE/THREONINE-PROTEIN KINASE"/>
    <property type="match status" value="1"/>
</dbReference>
<dbReference type="Pfam" id="PF00069">
    <property type="entry name" value="Pkinase"/>
    <property type="match status" value="1"/>
</dbReference>
<dbReference type="SMART" id="SM00220">
    <property type="entry name" value="S_TKc"/>
    <property type="match status" value="1"/>
</dbReference>
<dbReference type="SUPFAM" id="SSF56112">
    <property type="entry name" value="Protein kinase-like (PK-like)"/>
    <property type="match status" value="1"/>
</dbReference>
<dbReference type="PROSITE" id="PS00107">
    <property type="entry name" value="PROTEIN_KINASE_ATP"/>
    <property type="match status" value="1"/>
</dbReference>
<dbReference type="PROSITE" id="PS50011">
    <property type="entry name" value="PROTEIN_KINASE_DOM"/>
    <property type="match status" value="1"/>
</dbReference>
<dbReference type="PROSITE" id="PS00108">
    <property type="entry name" value="PROTEIN_KINASE_ST"/>
    <property type="match status" value="1"/>
</dbReference>
<keyword id="KW-0067">ATP-binding</keyword>
<keyword id="KW-0418">Kinase</keyword>
<keyword id="KW-0547">Nucleotide-binding</keyword>
<keyword id="KW-0597">Phosphoprotein</keyword>
<keyword id="KW-1185">Reference proteome</keyword>
<keyword id="KW-0723">Serine/threonine-protein kinase</keyword>
<keyword id="KW-0808">Transferase</keyword>
<name>PKH1_YEAST</name>
<feature type="chain" id="PRO_0000086552" description="Serine/threonine-protein kinase PKH1">
    <location>
        <begin position="1"/>
        <end position="766"/>
    </location>
</feature>
<feature type="domain" description="Protein kinase" evidence="2">
    <location>
        <begin position="125"/>
        <end position="391"/>
    </location>
</feature>
<feature type="region of interest" description="Disordered" evidence="4">
    <location>
        <begin position="1"/>
        <end position="52"/>
    </location>
</feature>
<feature type="region of interest" description="PIF-pocket" evidence="1">
    <location>
        <begin position="156"/>
        <end position="201"/>
    </location>
</feature>
<feature type="region of interest" description="Disordered" evidence="4">
    <location>
        <begin position="476"/>
        <end position="529"/>
    </location>
</feature>
<feature type="region of interest" description="Disordered" evidence="4">
    <location>
        <begin position="725"/>
        <end position="745"/>
    </location>
</feature>
<feature type="compositionally biased region" description="Polar residues" evidence="4">
    <location>
        <begin position="38"/>
        <end position="52"/>
    </location>
</feature>
<feature type="compositionally biased region" description="Polar residues" evidence="4">
    <location>
        <begin position="476"/>
        <end position="495"/>
    </location>
</feature>
<feature type="compositionally biased region" description="Low complexity" evidence="4">
    <location>
        <begin position="511"/>
        <end position="521"/>
    </location>
</feature>
<feature type="compositionally biased region" description="Polar residues" evidence="4">
    <location>
        <begin position="735"/>
        <end position="745"/>
    </location>
</feature>
<feature type="active site" description="Proton acceptor" evidence="2 3">
    <location>
        <position position="249"/>
    </location>
</feature>
<feature type="binding site" evidence="1">
    <location>
        <begin position="135"/>
        <end position="137"/>
    </location>
    <ligand>
        <name>ATP</name>
        <dbReference type="ChEBI" id="CHEBI:30616"/>
    </ligand>
</feature>
<feature type="binding site" evidence="1">
    <location>
        <position position="154"/>
    </location>
    <ligand>
        <name>ATP</name>
        <dbReference type="ChEBI" id="CHEBI:30616"/>
    </ligand>
</feature>
<feature type="binding site" evidence="1">
    <location>
        <begin position="204"/>
        <end position="206"/>
    </location>
    <ligand>
        <name>ATP</name>
        <dbReference type="ChEBI" id="CHEBI:30616"/>
    </ligand>
</feature>
<feature type="binding site" evidence="1">
    <location>
        <position position="210"/>
    </location>
    <ligand>
        <name>ATP</name>
        <dbReference type="ChEBI" id="CHEBI:30616"/>
    </ligand>
</feature>
<feature type="binding site" evidence="1">
    <location>
        <position position="253"/>
    </location>
    <ligand>
        <name>ATP</name>
        <dbReference type="ChEBI" id="CHEBI:30616"/>
    </ligand>
</feature>
<feature type="binding site" evidence="1">
    <location>
        <position position="267"/>
    </location>
    <ligand>
        <name>ATP</name>
        <dbReference type="ChEBI" id="CHEBI:30616"/>
    </ligand>
</feature>
<feature type="modified residue" description="Phosphoserine" evidence="9">
    <location>
        <position position="294"/>
    </location>
</feature>
<feature type="modified residue" description="Phosphoserine" evidence="7 8 9">
    <location>
        <position position="296"/>
    </location>
</feature>